<organism>
    <name type="scientific">Geobacillus stearothermophilus</name>
    <name type="common">Bacillus stearothermophilus</name>
    <dbReference type="NCBI Taxonomy" id="1422"/>
    <lineage>
        <taxon>Bacteria</taxon>
        <taxon>Bacillati</taxon>
        <taxon>Bacillota</taxon>
        <taxon>Bacilli</taxon>
        <taxon>Bacillales</taxon>
        <taxon>Anoxybacillaceae</taxon>
        <taxon>Geobacillus</taxon>
    </lineage>
</organism>
<protein>
    <recommendedName>
        <fullName>Thermolysin</fullName>
        <ecNumber>3.4.24.27</ecNumber>
    </recommendedName>
    <alternativeName>
        <fullName>Neutral protease</fullName>
    </alternativeName>
</protein>
<keyword id="KW-0002">3D-structure</keyword>
<keyword id="KW-0106">Calcium</keyword>
<keyword id="KW-0903">Direct protein sequencing</keyword>
<keyword id="KW-0378">Hydrolase</keyword>
<keyword id="KW-0479">Metal-binding</keyword>
<keyword id="KW-0482">Metalloprotease</keyword>
<keyword id="KW-0645">Protease</keyword>
<keyword id="KW-0964">Secreted</keyword>
<keyword id="KW-0732">Signal</keyword>
<keyword id="KW-0862">Zinc</keyword>
<keyword id="KW-0865">Zymogen</keyword>
<comment type="function">
    <text evidence="5">Extracellular zinc metalloprotease.</text>
</comment>
<comment type="catalytic activity">
    <reaction>
        <text>Preferential cleavage: Xaa-|-Leu &gt; Xaa-|-Phe.</text>
        <dbReference type="EC" id="3.4.24.27"/>
    </reaction>
</comment>
<comment type="cofactor">
    <cofactor evidence="1">
        <name>Ca(2+)</name>
        <dbReference type="ChEBI" id="CHEBI:29108"/>
    </cofactor>
    <text evidence="1">Binds 4 Ca(2+) ions per subunit.</text>
</comment>
<comment type="cofactor">
    <cofactor evidence="1">
        <name>Zn(2+)</name>
        <dbReference type="ChEBI" id="CHEBI:29105"/>
    </cofactor>
    <text evidence="1">Binds 1 zinc ion per subunit.</text>
</comment>
<comment type="biophysicochemical properties">
    <temperatureDependence>
        <text evidence="5">Thermostable. Retains about 45% of its activity after treatment of 90 degrees Celsius for 30 minutes.</text>
    </temperatureDependence>
</comment>
<comment type="subcellular location">
    <subcellularLocation>
        <location evidence="5">Secreted</location>
    </subcellularLocation>
</comment>
<comment type="induction">
    <text evidence="4">Is expressed in the stationary phase. Up-regulated by NprA.</text>
</comment>
<comment type="similarity">
    <text evidence="6">Belongs to the peptidase M4 family.</text>
</comment>
<reference key="1">
    <citation type="journal article" date="1988" name="J. Gen. Microbiol.">
        <title>Cloning and nucleotide sequence of the highly thermostable neutral protease gene from Bacillus stearothermophilus.</title>
        <authorList>
            <person name="Kubo M."/>
            <person name="Imanaka T."/>
        </authorList>
    </citation>
    <scope>NUCLEOTIDE SEQUENCE [GENOMIC DNA]</scope>
    <scope>PROTEIN SEQUENCE OF 236-240</scope>
    <scope>FUNCTION AS A PROTEASE</scope>
    <scope>TEMPERATURE DEPENDENCE</scope>
    <scope>SUBCELLULAR LOCATION</scope>
    <source>
        <strain>MK232</strain>
    </source>
</reference>
<reference key="2">
    <citation type="journal article" date="1990" name="J. Bacteriol.">
        <title>Cloning and nucleotide sequences of the Bacillus stearothermophilus neutral protease gene and its transcriptional activator gene.</title>
        <authorList>
            <person name="Nishiya Y."/>
            <person name="Imanaka T."/>
        </authorList>
    </citation>
    <scope>NUCLEOTIDE SEQUENCE [GENOMIC DNA]</scope>
    <scope>PROTEIN SEQUENCE OF 236-239</scope>
    <scope>INDUCTION</scope>
    <source>
        <strain>TELNE</strain>
    </source>
</reference>
<accession>P43133</accession>
<name>THER_GEOSE</name>
<proteinExistence type="evidence at protein level"/>
<feature type="signal peptide" evidence="2">
    <location>
        <begin position="1"/>
        <end position="31"/>
    </location>
</feature>
<feature type="propeptide" id="PRO_0000028612" description="Activation peptide" evidence="4 5">
    <location>
        <begin position="32"/>
        <end position="235"/>
    </location>
</feature>
<feature type="chain" id="PRO_0000028613" description="Thermolysin">
    <location>
        <begin position="236"/>
        <end position="551"/>
    </location>
</feature>
<feature type="active site" evidence="3">
    <location>
        <position position="378"/>
    </location>
</feature>
<feature type="active site" description="Proton donor" evidence="3">
    <location>
        <position position="466"/>
    </location>
</feature>
<feature type="binding site" evidence="1">
    <location>
        <position position="292"/>
    </location>
    <ligand>
        <name>Ca(2+)</name>
        <dbReference type="ChEBI" id="CHEBI:29108"/>
        <label>1</label>
    </ligand>
</feature>
<feature type="binding site" evidence="1">
    <location>
        <position position="294"/>
    </location>
    <ligand>
        <name>Ca(2+)</name>
        <dbReference type="ChEBI" id="CHEBI:29108"/>
        <label>1</label>
    </ligand>
</feature>
<feature type="binding site" evidence="1">
    <location>
        <position position="296"/>
    </location>
    <ligand>
        <name>Ca(2+)</name>
        <dbReference type="ChEBI" id="CHEBI:29108"/>
        <label>1</label>
    </ligand>
</feature>
<feature type="binding site" evidence="1">
    <location>
        <position position="373"/>
    </location>
    <ligand>
        <name>Ca(2+)</name>
        <dbReference type="ChEBI" id="CHEBI:29108"/>
        <label>2</label>
    </ligand>
</feature>
<feature type="binding site" evidence="3">
    <location>
        <position position="377"/>
    </location>
    <ligand>
        <name>Zn(2+)</name>
        <dbReference type="ChEBI" id="CHEBI:29105"/>
        <note>catalytic</note>
    </ligand>
</feature>
<feature type="binding site" evidence="3">
    <location>
        <position position="381"/>
    </location>
    <ligand>
        <name>Zn(2+)</name>
        <dbReference type="ChEBI" id="CHEBI:29105"/>
        <note>catalytic</note>
    </ligand>
</feature>
<feature type="binding site" evidence="3">
    <location>
        <position position="401"/>
    </location>
    <ligand>
        <name>Zn(2+)</name>
        <dbReference type="ChEBI" id="CHEBI:29105"/>
        <note>catalytic</note>
    </ligand>
</feature>
<feature type="binding site" evidence="1">
    <location>
        <position position="412"/>
    </location>
    <ligand>
        <name>Ca(2+)</name>
        <dbReference type="ChEBI" id="CHEBI:29108"/>
        <label>2</label>
    </ligand>
</feature>
<feature type="binding site" evidence="1">
    <location>
        <position position="412"/>
    </location>
    <ligand>
        <name>Ca(2+)</name>
        <dbReference type="ChEBI" id="CHEBI:29108"/>
        <label>3</label>
    </ligand>
</feature>
<feature type="binding site" evidence="1">
    <location>
        <position position="418"/>
    </location>
    <ligand>
        <name>Ca(2+)</name>
        <dbReference type="ChEBI" id="CHEBI:29108"/>
        <label>3</label>
    </ligand>
</feature>
<feature type="binding site" evidence="1">
    <location>
        <position position="420"/>
    </location>
    <ligand>
        <name>Ca(2+)</name>
        <dbReference type="ChEBI" id="CHEBI:29108"/>
        <label>2</label>
    </ligand>
</feature>
<feature type="binding site" evidence="1">
    <location>
        <position position="420"/>
    </location>
    <ligand>
        <name>Ca(2+)</name>
        <dbReference type="ChEBI" id="CHEBI:29108"/>
        <label>3</label>
    </ligand>
</feature>
<feature type="binding site" evidence="1">
    <location>
        <position position="422"/>
    </location>
    <ligand>
        <name>Ca(2+)</name>
        <dbReference type="ChEBI" id="CHEBI:29108"/>
        <label>2</label>
    </ligand>
</feature>
<feature type="binding site" evidence="1">
    <location>
        <position position="425"/>
    </location>
    <ligand>
        <name>Ca(2+)</name>
        <dbReference type="ChEBI" id="CHEBI:29108"/>
        <label>2</label>
    </ligand>
</feature>
<feature type="binding site" evidence="1">
    <location>
        <position position="425"/>
    </location>
    <ligand>
        <name>Ca(2+)</name>
        <dbReference type="ChEBI" id="CHEBI:29108"/>
        <label>3</label>
    </ligand>
</feature>
<feature type="binding site" evidence="1">
    <location>
        <position position="429"/>
    </location>
    <ligand>
        <name>Ca(2+)</name>
        <dbReference type="ChEBI" id="CHEBI:29108"/>
        <label>4</label>
    </ligand>
</feature>
<feature type="binding site" evidence="1">
    <location>
        <position position="432"/>
    </location>
    <ligand>
        <name>Ca(2+)</name>
        <dbReference type="ChEBI" id="CHEBI:29108"/>
        <label>4</label>
    </ligand>
</feature>
<feature type="binding site" evidence="1">
    <location>
        <position position="435"/>
    </location>
    <ligand>
        <name>Ca(2+)</name>
        <dbReference type="ChEBI" id="CHEBI:29108"/>
        <label>4</label>
    </ligand>
</feature>
<feature type="sequence conflict" description="In Ref. 2; AA sequence." evidence="6" ref="2">
    <original>VRFGL</original>
    <variation>RSFGV</variation>
    <location>
        <begin position="10"/>
        <end position="14"/>
    </location>
</feature>
<feature type="sequence conflict" description="In Ref. 2; AAB02774." evidence="6" ref="2">
    <location>
        <position position="24"/>
    </location>
</feature>
<feature type="sequence conflict" description="In Ref. 2; AA sequence." evidence="6" ref="2">
    <original>ALAST</original>
    <variation>RLASS</variation>
    <location>
        <begin position="29"/>
        <end position="33"/>
    </location>
</feature>
<feature type="sequence conflict" description="In Ref. 2; AAB02774." evidence="6" ref="2">
    <original>A</original>
    <variation>Q</variation>
    <location>
        <position position="114"/>
    </location>
</feature>
<feature type="sequence conflict" description="In Ref. 2; AAB02774." evidence="6" ref="2">
    <original>T</original>
    <variation>S</variation>
    <location>
        <position position="124"/>
    </location>
</feature>
<feature type="sequence conflict" description="In Ref. 2; AA sequence." evidence="6" ref="2">
    <original>P</original>
    <variation>PIP</variation>
    <location>
        <position position="134"/>
    </location>
</feature>
<feature type="sequence conflict" description="In Ref. 2; AAB02774." evidence="6" ref="2">
    <original>T</original>
    <variation>S</variation>
    <location>
        <position position="261"/>
    </location>
</feature>
<feature type="sequence conflict" description="In Ref. 2; AAB02774." evidence="6" ref="2">
    <original>G</original>
    <variation>A</variation>
    <location>
        <position position="463"/>
    </location>
</feature>
<feature type="strand" evidence="8">
    <location>
        <begin position="239"/>
        <end position="246"/>
    </location>
</feature>
<feature type="strand" evidence="8">
    <location>
        <begin position="252"/>
        <end position="267"/>
    </location>
</feature>
<feature type="strand" evidence="8">
    <location>
        <begin position="274"/>
        <end position="278"/>
    </location>
</feature>
<feature type="strand" evidence="8">
    <location>
        <begin position="282"/>
        <end position="286"/>
    </location>
</feature>
<feature type="strand" evidence="8">
    <location>
        <begin position="291"/>
        <end position="297"/>
    </location>
</feature>
<feature type="helix" evidence="8">
    <location>
        <begin position="300"/>
        <end position="302"/>
    </location>
</feature>
<feature type="helix" evidence="8">
    <location>
        <begin position="303"/>
        <end position="323"/>
    </location>
</feature>
<feature type="turn" evidence="9">
    <location>
        <begin position="327"/>
        <end position="329"/>
    </location>
</feature>
<feature type="strand" evidence="8">
    <location>
        <begin position="335"/>
        <end position="344"/>
    </location>
</feature>
<feature type="strand" evidence="8">
    <location>
        <begin position="348"/>
        <end position="350"/>
    </location>
</feature>
<feature type="strand" evidence="8">
    <location>
        <begin position="355"/>
        <end position="358"/>
    </location>
</feature>
<feature type="strand" evidence="8">
    <location>
        <begin position="362"/>
        <end position="366"/>
    </location>
</feature>
<feature type="helix" evidence="8">
    <location>
        <begin position="368"/>
        <end position="370"/>
    </location>
</feature>
<feature type="helix" evidence="8">
    <location>
        <begin position="372"/>
        <end position="386"/>
    </location>
</feature>
<feature type="helix" evidence="8">
    <location>
        <begin position="394"/>
        <end position="415"/>
    </location>
</feature>
<feature type="strand" evidence="8">
    <location>
        <begin position="421"/>
        <end position="424"/>
    </location>
</feature>
<feature type="turn" evidence="8">
    <location>
        <begin position="425"/>
        <end position="427"/>
    </location>
</feature>
<feature type="strand" evidence="7">
    <location>
        <begin position="432"/>
        <end position="434"/>
    </location>
</feature>
<feature type="strand" evidence="8">
    <location>
        <begin position="437"/>
        <end position="441"/>
    </location>
</feature>
<feature type="helix" evidence="8">
    <location>
        <begin position="443"/>
        <end position="446"/>
    </location>
</feature>
<feature type="helix" evidence="8">
    <location>
        <begin position="452"/>
        <end position="454"/>
    </location>
</feature>
<feature type="helix" evidence="8">
    <location>
        <begin position="460"/>
        <end position="464"/>
    </location>
</feature>
<feature type="turn" evidence="8">
    <location>
        <begin position="465"/>
        <end position="468"/>
    </location>
</feature>
<feature type="helix" evidence="8">
    <location>
        <begin position="469"/>
        <end position="481"/>
    </location>
</feature>
<feature type="strand" evidence="8">
    <location>
        <begin position="483"/>
        <end position="485"/>
    </location>
</feature>
<feature type="strand" evidence="8">
    <location>
        <begin position="488"/>
        <end position="490"/>
    </location>
</feature>
<feature type="helix" evidence="8">
    <location>
        <begin position="495"/>
        <end position="508"/>
    </location>
</feature>
<feature type="helix" evidence="8">
    <location>
        <begin position="516"/>
        <end position="531"/>
    </location>
</feature>
<feature type="helix" evidence="8">
    <location>
        <begin position="536"/>
        <end position="547"/>
    </location>
</feature>
<gene>
    <name type="primary">nprS</name>
    <name type="synonym">nprM</name>
</gene>
<dbReference type="EC" id="3.4.24.27"/>
<dbReference type="EMBL" id="M21663">
    <property type="protein sequence ID" value="AAB02774.1"/>
    <property type="molecule type" value="Genomic_DNA"/>
</dbReference>
<dbReference type="EMBL" id="M34237">
    <property type="protein sequence ID" value="AAA22625.1"/>
    <property type="molecule type" value="Genomic_DNA"/>
</dbReference>
<dbReference type="PIR" id="A46564">
    <property type="entry name" value="A46564"/>
</dbReference>
<dbReference type="PIR" id="B36706">
    <property type="entry name" value="B36706"/>
</dbReference>
<dbReference type="PDB" id="5DLH">
    <property type="method" value="X-ray"/>
    <property type="resolution" value="2.25 A"/>
    <property type="chains" value="A=236-551"/>
</dbReference>
<dbReference type="PDB" id="5ONP">
    <property type="method" value="X-ray"/>
    <property type="resolution" value="1.34 A"/>
    <property type="chains" value="A=236-551"/>
</dbReference>
<dbReference type="PDB" id="5ONQ">
    <property type="method" value="X-ray"/>
    <property type="resolution" value="1.17 A"/>
    <property type="chains" value="A=236-551"/>
</dbReference>
<dbReference type="PDB" id="5WR2">
    <property type="method" value="X-ray"/>
    <property type="resolution" value="2.00 A"/>
    <property type="chains" value="A=236-551"/>
</dbReference>
<dbReference type="PDB" id="5WR3">
    <property type="method" value="X-ray"/>
    <property type="resolution" value="2.10 A"/>
    <property type="chains" value="A=236-551"/>
</dbReference>
<dbReference type="PDB" id="5WR4">
    <property type="method" value="X-ray"/>
    <property type="resolution" value="2.10 A"/>
    <property type="chains" value="A=236-551"/>
</dbReference>
<dbReference type="PDB" id="5WR5">
    <property type="method" value="X-ray"/>
    <property type="resolution" value="1.90 A"/>
    <property type="chains" value="A=236-551"/>
</dbReference>
<dbReference type="PDB" id="5WR6">
    <property type="method" value="X-ray"/>
    <property type="resolution" value="2.30 A"/>
    <property type="chains" value="A=236-551"/>
</dbReference>
<dbReference type="PDB" id="6FHP">
    <property type="method" value="X-ray"/>
    <property type="resolution" value="1.70 A"/>
    <property type="chains" value="C/D=490-551"/>
</dbReference>
<dbReference type="PDB" id="6FSM">
    <property type="method" value="X-ray"/>
    <property type="resolution" value="1.39 A"/>
    <property type="chains" value="A=236-551"/>
</dbReference>
<dbReference type="PDB" id="6GHX">
    <property type="method" value="X-ray"/>
    <property type="resolution" value="1.16 A"/>
    <property type="chains" value="A=236-551"/>
</dbReference>
<dbReference type="PDB" id="6Y4I">
    <property type="method" value="X-ray"/>
    <property type="resolution" value="1.16 A"/>
    <property type="chains" value="E=236-551"/>
</dbReference>
<dbReference type="PDB" id="6YI6">
    <property type="method" value="X-ray"/>
    <property type="resolution" value="1.44 A"/>
    <property type="chains" value="E=236-551"/>
</dbReference>
<dbReference type="PDB" id="6YMR">
    <property type="method" value="X-ray"/>
    <property type="resolution" value="1.60 A"/>
    <property type="chains" value="E=236-551"/>
</dbReference>
<dbReference type="PDB" id="6YMS">
    <property type="method" value="X-ray"/>
    <property type="resolution" value="1.32 A"/>
    <property type="chains" value="E=236-551"/>
</dbReference>
<dbReference type="PDBsum" id="5DLH"/>
<dbReference type="PDBsum" id="5ONP"/>
<dbReference type="PDBsum" id="5ONQ"/>
<dbReference type="PDBsum" id="5WR2"/>
<dbReference type="PDBsum" id="5WR3"/>
<dbReference type="PDBsum" id="5WR4"/>
<dbReference type="PDBsum" id="5WR5"/>
<dbReference type="PDBsum" id="5WR6"/>
<dbReference type="PDBsum" id="6FHP"/>
<dbReference type="PDBsum" id="6FSM"/>
<dbReference type="PDBsum" id="6GHX"/>
<dbReference type="PDBsum" id="6Y4I"/>
<dbReference type="PDBsum" id="6YI6"/>
<dbReference type="PDBsum" id="6YMR"/>
<dbReference type="PDBsum" id="6YMS"/>
<dbReference type="BMRB" id="P43133"/>
<dbReference type="SMR" id="P43133"/>
<dbReference type="ChEMBL" id="CHEMBL4523227"/>
<dbReference type="DrugBank" id="DB01935">
    <property type="generic name" value="3-{[(1r)-1-Benzyl-2-Sulfanylethyl]Amino}-3-Oxopropanoic Acid"/>
</dbReference>
<dbReference type="DrugBank" id="DB02597">
    <property type="generic name" value="[2(R,S)-2-Sulfanylheptanoyl]-Phe-Ala"/>
</dbReference>
<dbReference type="DrugBank" id="DB04569">
    <property type="generic name" value="Benzyl formate"/>
</dbReference>
<dbReference type="DrugBank" id="DB01786">
    <property type="generic name" value="D-Alanine"/>
</dbReference>
<dbReference type="DrugBank" id="DB02655">
    <property type="generic name" value="D-Aspartic Acid"/>
</dbReference>
<dbReference type="DrugBank" id="DB02517">
    <property type="generic name" value="D-Glutamic Acid"/>
</dbReference>
<dbReference type="DrugBank" id="DB03700">
    <property type="generic name" value="D-Threonine"/>
</dbReference>
<dbReference type="DrugBank" id="DB03308">
    <property type="generic name" value="L-Leucyl-Hydroxylamine"/>
</dbReference>
<dbReference type="DrugBank" id="DB03949">
    <property type="generic name" value="N-[(2S)-3-Phenyl-2-sulfanylpropanoyl]-L-phenylalanyl-L-tyrosine"/>
</dbReference>
<dbReference type="DrugBank" id="DB02669">
    <property type="generic name" value="RB106"/>
</dbReference>
<dbReference type="MEROPS" id="M04.001"/>
<dbReference type="BRENDA" id="3.4.24.28">
    <property type="organism ID" value="623"/>
</dbReference>
<dbReference type="GO" id="GO:0005576">
    <property type="term" value="C:extracellular region"/>
    <property type="evidence" value="ECO:0007669"/>
    <property type="project" value="UniProtKB-SubCell"/>
</dbReference>
<dbReference type="GO" id="GO:0046872">
    <property type="term" value="F:metal ion binding"/>
    <property type="evidence" value="ECO:0007669"/>
    <property type="project" value="UniProtKB-KW"/>
</dbReference>
<dbReference type="GO" id="GO:0004222">
    <property type="term" value="F:metalloendopeptidase activity"/>
    <property type="evidence" value="ECO:0007669"/>
    <property type="project" value="InterPro"/>
</dbReference>
<dbReference type="GO" id="GO:0006508">
    <property type="term" value="P:proteolysis"/>
    <property type="evidence" value="ECO:0007669"/>
    <property type="project" value="UniProtKB-KW"/>
</dbReference>
<dbReference type="CDD" id="cd09597">
    <property type="entry name" value="M4_TLP"/>
    <property type="match status" value="1"/>
</dbReference>
<dbReference type="FunFam" id="1.10.390.10:FF:000012">
    <property type="entry name" value="Thermolysin"/>
    <property type="match status" value="1"/>
</dbReference>
<dbReference type="Gene3D" id="3.10.170.10">
    <property type="match status" value="1"/>
</dbReference>
<dbReference type="Gene3D" id="3.10.450.40">
    <property type="match status" value="1"/>
</dbReference>
<dbReference type="Gene3D" id="3.10.450.490">
    <property type="match status" value="1"/>
</dbReference>
<dbReference type="Gene3D" id="1.10.390.10">
    <property type="entry name" value="Neutral Protease Domain 2"/>
    <property type="match status" value="1"/>
</dbReference>
<dbReference type="InterPro" id="IPR011096">
    <property type="entry name" value="FTP_domain"/>
</dbReference>
<dbReference type="InterPro" id="IPR025711">
    <property type="entry name" value="PepSY"/>
</dbReference>
<dbReference type="InterPro" id="IPR023612">
    <property type="entry name" value="Peptidase_M4"/>
</dbReference>
<dbReference type="InterPro" id="IPR027268">
    <property type="entry name" value="Peptidase_M4/M1_CTD_sf"/>
</dbReference>
<dbReference type="InterPro" id="IPR001570">
    <property type="entry name" value="Peptidase_M4_C_domain"/>
</dbReference>
<dbReference type="InterPro" id="IPR013856">
    <property type="entry name" value="Peptidase_M4_domain"/>
</dbReference>
<dbReference type="InterPro" id="IPR050728">
    <property type="entry name" value="Zinc_Metalloprotease_M4"/>
</dbReference>
<dbReference type="PANTHER" id="PTHR33794">
    <property type="entry name" value="BACILLOLYSIN"/>
    <property type="match status" value="1"/>
</dbReference>
<dbReference type="PANTHER" id="PTHR33794:SF3">
    <property type="entry name" value="NEUTRAL PROTEASE B"/>
    <property type="match status" value="1"/>
</dbReference>
<dbReference type="Pfam" id="PF07504">
    <property type="entry name" value="FTP"/>
    <property type="match status" value="1"/>
</dbReference>
<dbReference type="Pfam" id="PF03413">
    <property type="entry name" value="PepSY"/>
    <property type="match status" value="1"/>
</dbReference>
<dbReference type="Pfam" id="PF01447">
    <property type="entry name" value="Peptidase_M4"/>
    <property type="match status" value="1"/>
</dbReference>
<dbReference type="Pfam" id="PF02868">
    <property type="entry name" value="Peptidase_M4_C"/>
    <property type="match status" value="1"/>
</dbReference>
<dbReference type="PRINTS" id="PR00730">
    <property type="entry name" value="THERMOLYSIN"/>
</dbReference>
<dbReference type="SUPFAM" id="SSF55486">
    <property type="entry name" value="Metalloproteases ('zincins'), catalytic domain"/>
    <property type="match status" value="1"/>
</dbReference>
<dbReference type="PROSITE" id="PS00142">
    <property type="entry name" value="ZINC_PROTEASE"/>
    <property type="match status" value="1"/>
</dbReference>
<sequence>MKRKMKMKLVRFGLAAGLAAQVFFLPYNALASTEHVTWNQQFQTPQFISGDLLKVNGTSPEELVYQYVEKNENKFKFHENAKDTLQLKEKKNDNLGFTFMRFQQTYKGIPVFGAVVTAHVKDGTLTALSGTLIPNLDTKGSLKSGKKLSEKQARDIAEKDLVANVTKEVPEYEQGKDTEFVVYVNGDEASLAYVVNLNFLTPEPGNWLYIIDAVDGKILNKFNQLDAAKPGDVKSITGTSTVGVGRGVLGDQKNINTTYSTYYYLQDNTRGNGIFTYDAKYRTTLPGSLWADADNQFFASYDAPAVDAHYYAGVTYDYYKNVHNRLSYDGNNAAIRSSVHYSQGYNNAFWNGSQMVYGDGDGQTFIPLSGGIDVVAHELTHAVTDYTAGLIYQNESGAINEAISDIFGTLVEFYANKNPDWEIGEDVYTPGISGDSLRSMSDPAKYGDPDHYSKRYTGTQDNGGVHINSGIINKAAYLISQGGTHYGVSVVGIGRDKLGKIFYRALTQYLTPTSNFSQLRAAAVQSATDLYGSTSQEVASVKQAFDAVGVK</sequence>
<evidence type="ECO:0000250" key="1"/>
<evidence type="ECO:0000255" key="2"/>
<evidence type="ECO:0000255" key="3">
    <source>
        <dbReference type="PROSITE-ProRule" id="PRU10095"/>
    </source>
</evidence>
<evidence type="ECO:0000269" key="4">
    <source>
    </source>
</evidence>
<evidence type="ECO:0000269" key="5">
    <source>
    </source>
</evidence>
<evidence type="ECO:0000305" key="6"/>
<evidence type="ECO:0007829" key="7">
    <source>
        <dbReference type="PDB" id="6FSM"/>
    </source>
</evidence>
<evidence type="ECO:0007829" key="8">
    <source>
        <dbReference type="PDB" id="6GHX"/>
    </source>
</evidence>
<evidence type="ECO:0007829" key="9">
    <source>
        <dbReference type="PDB" id="6Y4I"/>
    </source>
</evidence>